<accession>A4SH20</accession>
<reference key="1">
    <citation type="submission" date="2007-03" db="EMBL/GenBank/DDBJ databases">
        <title>Complete sequence of Prosthecochloris vibrioformis DSM 265.</title>
        <authorList>
            <consortium name="US DOE Joint Genome Institute"/>
            <person name="Copeland A."/>
            <person name="Lucas S."/>
            <person name="Lapidus A."/>
            <person name="Barry K."/>
            <person name="Detter J.C."/>
            <person name="Glavina del Rio T."/>
            <person name="Hammon N."/>
            <person name="Israni S."/>
            <person name="Pitluck S."/>
            <person name="Schmutz J."/>
            <person name="Larimer F."/>
            <person name="Land M."/>
            <person name="Hauser L."/>
            <person name="Mikhailova N."/>
            <person name="Li T."/>
            <person name="Overmann J."/>
            <person name="Schuster S.C."/>
            <person name="Bryant D.A."/>
            <person name="Richardson P."/>
        </authorList>
    </citation>
    <scope>NUCLEOTIDE SEQUENCE [LARGE SCALE GENOMIC DNA]</scope>
    <source>
        <strain>DSM 265 / 1930</strain>
    </source>
</reference>
<feature type="chain" id="PRO_1000088258" description="Membrane protein insertase YidC">
    <location>
        <begin position="1"/>
        <end position="580"/>
    </location>
</feature>
<feature type="transmembrane region" description="Helical" evidence="1">
    <location>
        <begin position="5"/>
        <end position="25"/>
    </location>
</feature>
<feature type="transmembrane region" description="Helical" evidence="1">
    <location>
        <begin position="259"/>
        <end position="279"/>
    </location>
</feature>
<feature type="transmembrane region" description="Helical" evidence="1">
    <location>
        <begin position="362"/>
        <end position="382"/>
    </location>
</feature>
<feature type="transmembrane region" description="Helical" evidence="1">
    <location>
        <begin position="427"/>
        <end position="447"/>
    </location>
</feature>
<feature type="transmembrane region" description="Helical" evidence="1">
    <location>
        <begin position="477"/>
        <end position="497"/>
    </location>
</feature>
<feature type="transmembrane region" description="Helical" evidence="1">
    <location>
        <begin position="513"/>
        <end position="533"/>
    </location>
</feature>
<gene>
    <name evidence="1" type="primary">yidC</name>
    <name type="ordered locus">Cvib_1771</name>
</gene>
<name>YIDC_CHLPM</name>
<protein>
    <recommendedName>
        <fullName evidence="1">Membrane protein insertase YidC</fullName>
    </recommendedName>
    <alternativeName>
        <fullName evidence="1">Foldase YidC</fullName>
    </alternativeName>
    <alternativeName>
        <fullName evidence="1">Membrane integrase YidC</fullName>
    </alternativeName>
    <alternativeName>
        <fullName evidence="1">Membrane protein YidC</fullName>
    </alternativeName>
</protein>
<proteinExistence type="inferred from homology"/>
<sequence>MDRNSVTGLALIALIMIVWLQFMSPDKKPVIRESAKKAASVEQVNVPLKPAPVSASDAFGAFASAANGKARKMVVENDLFRATISSKGATLTSLVLKKHLDGALQPVQLVSNRADGALSLLFLTREGRKIDTRDLYFTGGSVDTLHTVTGKESYSVRYRLNVSKNRNILITYSFTGDSYRVGYDVQLNGFSSALAGNEYQLQWDGGLGYTEKNREDEAHNALAGAYLGGSLVKLDAAKDNQAYREEQSGEAKWVAVRNKYFVAALIPAGPTGGFYLDGSKKAGNEFENYLASLKMEVPVSGASLDNSFSLYMGPLDYDIVRAQKAELEKIMDFGWDWLTRPFAEYIILPVFSWMNKFIHNYGLIIIIFAFLIKLVTYPLSLASTKSMKKMAALQPMLKELQDKYKDNPAKLQSELGRIYKEAGVNPLGGCLPVVLQMPLLFAMFYVFRSSIELRQHGFLWAHDLSVPDSILNLGFTIPMYGDHIALMPILMAGTVFVQQKITPTAQTNDQMKIMLYMFPAMMLLFFNNMPSGLGLYYLMFNVFSVAQQFYINSTTTEADMPNVSIAAPARQKKKKSGGGK</sequence>
<dbReference type="EMBL" id="CP000607">
    <property type="protein sequence ID" value="ABP37779.1"/>
    <property type="molecule type" value="Genomic_DNA"/>
</dbReference>
<dbReference type="SMR" id="A4SH20"/>
<dbReference type="STRING" id="290318.Cvib_1771"/>
<dbReference type="KEGG" id="pvi:Cvib_1771"/>
<dbReference type="eggNOG" id="COG0706">
    <property type="taxonomic scope" value="Bacteria"/>
</dbReference>
<dbReference type="HOGENOM" id="CLU_016535_2_0_10"/>
<dbReference type="OrthoDB" id="9780552at2"/>
<dbReference type="GO" id="GO:0005886">
    <property type="term" value="C:plasma membrane"/>
    <property type="evidence" value="ECO:0007669"/>
    <property type="project" value="UniProtKB-SubCell"/>
</dbReference>
<dbReference type="GO" id="GO:0032977">
    <property type="term" value="F:membrane insertase activity"/>
    <property type="evidence" value="ECO:0007669"/>
    <property type="project" value="InterPro"/>
</dbReference>
<dbReference type="GO" id="GO:0051205">
    <property type="term" value="P:protein insertion into membrane"/>
    <property type="evidence" value="ECO:0007669"/>
    <property type="project" value="TreeGrafter"/>
</dbReference>
<dbReference type="GO" id="GO:0015031">
    <property type="term" value="P:protein transport"/>
    <property type="evidence" value="ECO:0007669"/>
    <property type="project" value="UniProtKB-KW"/>
</dbReference>
<dbReference type="CDD" id="cd20070">
    <property type="entry name" value="5TM_YidC_Alb3"/>
    <property type="match status" value="1"/>
</dbReference>
<dbReference type="CDD" id="cd19961">
    <property type="entry name" value="EcYidC-like_peri"/>
    <property type="match status" value="1"/>
</dbReference>
<dbReference type="Gene3D" id="2.70.98.90">
    <property type="match status" value="1"/>
</dbReference>
<dbReference type="HAMAP" id="MF_01810">
    <property type="entry name" value="YidC_type1"/>
    <property type="match status" value="1"/>
</dbReference>
<dbReference type="InterPro" id="IPR019998">
    <property type="entry name" value="Membr_insert_YidC"/>
</dbReference>
<dbReference type="InterPro" id="IPR028053">
    <property type="entry name" value="Membr_insert_YidC_N"/>
</dbReference>
<dbReference type="InterPro" id="IPR001708">
    <property type="entry name" value="YidC/ALB3/OXA1/COX18"/>
</dbReference>
<dbReference type="InterPro" id="IPR028055">
    <property type="entry name" value="YidC/Oxa/ALB_C"/>
</dbReference>
<dbReference type="InterPro" id="IPR047196">
    <property type="entry name" value="YidC_ALB_C"/>
</dbReference>
<dbReference type="InterPro" id="IPR038221">
    <property type="entry name" value="YidC_periplasmic_sf"/>
</dbReference>
<dbReference type="NCBIfam" id="TIGR03593">
    <property type="entry name" value="yidC_nterm"/>
    <property type="match status" value="1"/>
</dbReference>
<dbReference type="NCBIfam" id="TIGR03592">
    <property type="entry name" value="yidC_oxa1_cterm"/>
    <property type="match status" value="1"/>
</dbReference>
<dbReference type="PANTHER" id="PTHR12428:SF65">
    <property type="entry name" value="CYTOCHROME C OXIDASE ASSEMBLY PROTEIN COX18, MITOCHONDRIAL"/>
    <property type="match status" value="1"/>
</dbReference>
<dbReference type="PANTHER" id="PTHR12428">
    <property type="entry name" value="OXA1"/>
    <property type="match status" value="1"/>
</dbReference>
<dbReference type="Pfam" id="PF02096">
    <property type="entry name" value="60KD_IMP"/>
    <property type="match status" value="1"/>
</dbReference>
<dbReference type="Pfam" id="PF14849">
    <property type="entry name" value="YidC_periplas"/>
    <property type="match status" value="1"/>
</dbReference>
<dbReference type="PRINTS" id="PR00701">
    <property type="entry name" value="60KDINNERMP"/>
</dbReference>
<dbReference type="PRINTS" id="PR01900">
    <property type="entry name" value="YIDCPROTEIN"/>
</dbReference>
<organism>
    <name type="scientific">Chlorobium phaeovibrioides (strain DSM 265 / 1930)</name>
    <name type="common">Prosthecochloris vibrioformis (strain DSM 265)</name>
    <dbReference type="NCBI Taxonomy" id="290318"/>
    <lineage>
        <taxon>Bacteria</taxon>
        <taxon>Pseudomonadati</taxon>
        <taxon>Chlorobiota</taxon>
        <taxon>Chlorobiia</taxon>
        <taxon>Chlorobiales</taxon>
        <taxon>Chlorobiaceae</taxon>
        <taxon>Chlorobium/Pelodictyon group</taxon>
        <taxon>Chlorobium</taxon>
    </lineage>
</organism>
<evidence type="ECO:0000255" key="1">
    <source>
        <dbReference type="HAMAP-Rule" id="MF_01810"/>
    </source>
</evidence>
<comment type="function">
    <text evidence="1">Required for the insertion and/or proper folding and/or complex formation of integral membrane proteins into the membrane. Involved in integration of membrane proteins that insert both dependently and independently of the Sec translocase complex, as well as at least some lipoproteins. Aids folding of multispanning membrane proteins.</text>
</comment>
<comment type="subunit">
    <text evidence="1">Interacts with the Sec translocase complex via SecD. Specifically interacts with transmembrane segments of nascent integral membrane proteins during membrane integration.</text>
</comment>
<comment type="subcellular location">
    <subcellularLocation>
        <location evidence="1">Cell inner membrane</location>
        <topology evidence="1">Multi-pass membrane protein</topology>
    </subcellularLocation>
</comment>
<comment type="similarity">
    <text evidence="1">Belongs to the OXA1/ALB3/YidC family. Type 1 subfamily.</text>
</comment>
<keyword id="KW-0997">Cell inner membrane</keyword>
<keyword id="KW-1003">Cell membrane</keyword>
<keyword id="KW-0143">Chaperone</keyword>
<keyword id="KW-0472">Membrane</keyword>
<keyword id="KW-0653">Protein transport</keyword>
<keyword id="KW-0812">Transmembrane</keyword>
<keyword id="KW-1133">Transmembrane helix</keyword>
<keyword id="KW-0813">Transport</keyword>